<gene>
    <name evidence="2" type="primary">tek</name>
    <name type="synonym">tie-2</name>
    <name evidence="10" type="synonym">tie2</name>
</gene>
<accession>O73791</accession>
<keyword id="KW-0067">ATP-binding</keyword>
<keyword id="KW-0965">Cell junction</keyword>
<keyword id="KW-1003">Cell membrane</keyword>
<keyword id="KW-0963">Cytoplasm</keyword>
<keyword id="KW-0206">Cytoskeleton</keyword>
<keyword id="KW-1015">Disulfide bond</keyword>
<keyword id="KW-0245">EGF-like domain</keyword>
<keyword id="KW-0325">Glycoprotein</keyword>
<keyword id="KW-0393">Immunoglobulin domain</keyword>
<keyword id="KW-0418">Kinase</keyword>
<keyword id="KW-0472">Membrane</keyword>
<keyword id="KW-0547">Nucleotide-binding</keyword>
<keyword id="KW-0597">Phosphoprotein</keyword>
<keyword id="KW-0675">Receptor</keyword>
<keyword id="KW-1185">Reference proteome</keyword>
<keyword id="KW-0677">Repeat</keyword>
<keyword id="KW-0732">Signal</keyword>
<keyword id="KW-0808">Transferase</keyword>
<keyword id="KW-0812">Transmembrane</keyword>
<keyword id="KW-1133">Transmembrane helix</keyword>
<keyword id="KW-0829">Tyrosine-protein kinase</keyword>
<sequence>MCLLDSCTALLLLGCWMSGSAVRISDVTLVNPDPVVSPLTAPSLLCVSSDWSSGGSVLALGQEFPRPQGSVLALGQEFPHTEPRPHPAAATVTWSSRSHAFGAFYCQIRNSTGRKIYTYKMLQEAAFLPESLTITVNQGENINISYSRRLYSPEDTVIHKNGHFEHSSPKEDISDIIHYPVTNAKAESHAGIYAIRYISAAPSSAAITRLIVRSCRAGFWGPNCTESCPRCANGGVCDDTTGECVCPPGFRGHTCDIVCGEGRFGAGCKERCVDGVCRALVFCLRDPYGCSCASGWRGLSCNDACPDGYYGAGCTQKCVCAKGRCDRFRGCVCAGRHGSRCEEADSSPVISHLRDVEINTGVELSVNCSASGRPAPLHGDITLITANRTTIAAVDTHTLNDQSTSVFRVQQVRVSSAGRWRCQVNNTHMQVEDEFTVEVKVPPRPQNPPVLQGSGPRHLLLLLNTEPYSGDGPIATTTLLYRPASAHTWSSVTAHGPLVRLDNLYPMTQYLTQVQLSRPGPGGAGQAGPAATFSTQVLELPVGVKLSAVSQTALLLSWDIAPAEQHCTYEVSCLQAGAPGTLRTFQLPSNSSAMHLSDLKPRHKYQCTVRSSCGVGQNHPSASAWTLSDQLPPPPANISIWNISDTSAVLTWAVAEGESVSRAVIRFQQVEQAQYRQQVELPVQTQQLHMRFQLLGLRPNTGYQLQLWTVNNMGESAESPPVSLMTLPQQESSALFAAHGHLLLYAILGSAGMTCCTVLLAFCIVLQLKRNTLQRRIHSILREEPAVHFSSAPPPHRRSAVVSRSLVFPALQWSDIQFQDVLGEGNFGQVLKARIRKDGLRMDAAVKRMKDYASQDDHRDFAGELEVLCRLGPHKNIIHLLGACEHRGYLYLAIEFAPHGNLLDFLRKSRVLETDPAFAIAHRTASTLSSQQLLAFSADVARGMSYLSQKQFIHRDLAARNVLVGENFVAKIADFGLSRGQEVYVKKTMGRLPVRWMAIESLNYSVYTTNSDVWSYGVLLWEVVSLGGTPYCGMTCAELYEKLPLGFRLEKPLNCDDEVYELMQQCWREKPFERPSFSQILLSLGRMLEERKTYVNTTLYEKFTYAGIDCSAEEAG</sequence>
<reference key="1">
    <citation type="journal article" date="1998" name="Dev. Dyn.">
        <title>Isolation of the zebrafish homologues for the tie-1 and tie-2 endothelium-specific receptor tyrosine kinases.</title>
        <authorList>
            <person name="Lyons M.S."/>
            <person name="Bell B."/>
            <person name="Stainier D."/>
            <person name="Peters K.G."/>
        </authorList>
    </citation>
    <scope>NUCLEOTIDE SEQUENCE [MRNA]</scope>
    <scope>DEVELOPMENTAL STAGE</scope>
    <source>
        <tissue>Embryo</tissue>
    </source>
</reference>
<reference key="2">
    <citation type="journal article" date="2023" name="Elife">
        <title>Svep1 is a binding ligand of Tie1 and affects specific aspects of facial lymphatic development in a Vegfc-independent manner.</title>
        <authorList>
            <person name="Hussmann M."/>
            <person name="Schulte D."/>
            <person name="Weischer S."/>
            <person name="Carlantoni C."/>
            <person name="Nakajima H."/>
            <person name="Mochizuki N."/>
            <person name="Stainier D.Y.R."/>
            <person name="Zobel T."/>
            <person name="Koch M."/>
            <person name="Schulte-Merker S."/>
        </authorList>
    </citation>
    <scope>INTERACTION WITH SVEP1</scope>
</reference>
<comment type="function">
    <text evidence="1">Tyrosine-protein kinase that acts as a cell-surface receptor for angiopoietins and regulates angiogenesis, endothelial cell survival, proliferation, migration, adhesion and cell spreading, reorganization of the actin cytoskeleton, but also maintenance of vascular quiescence. Can activate or inhibit angiogenesis, depending on the context. Angiopoietin signaling triggers receptor dimerization and autophosphorylation at specific tyrosine residues that then serve as binding sites for scaffold proteins and effectors (By similarity).</text>
</comment>
<comment type="catalytic activity">
    <reaction evidence="7">
        <text>L-tyrosyl-[protein] + ATP = O-phospho-L-tyrosyl-[protein] + ADP + H(+)</text>
        <dbReference type="Rhea" id="RHEA:10596"/>
        <dbReference type="Rhea" id="RHEA-COMP:10136"/>
        <dbReference type="Rhea" id="RHEA-COMP:20101"/>
        <dbReference type="ChEBI" id="CHEBI:15378"/>
        <dbReference type="ChEBI" id="CHEBI:30616"/>
        <dbReference type="ChEBI" id="CHEBI:46858"/>
        <dbReference type="ChEBI" id="CHEBI:61978"/>
        <dbReference type="ChEBI" id="CHEBI:456216"/>
        <dbReference type="EC" id="2.7.10.1"/>
    </reaction>
</comment>
<comment type="activity regulation">
    <text evidence="1">Angiopoietin binding leads to receptor dimerization and activation by autophosphorylation at Tyr-984 on the kinase activation loop.</text>
</comment>
<comment type="subunit">
    <text evidence="8">Interacts with svep1.</text>
</comment>
<comment type="subcellular location">
    <subcellularLocation>
        <location evidence="2">Cell membrane</location>
        <topology evidence="3">Single-pass type I membrane protein</topology>
    </subcellularLocation>
    <subcellularLocation>
        <location evidence="2">Cell junction</location>
    </subcellularLocation>
    <subcellularLocation>
        <location evidence="2">Cell junction</location>
        <location evidence="2">Focal adhesion</location>
    </subcellularLocation>
    <subcellularLocation>
        <location evidence="1">Cytoplasm</location>
        <location evidence="1">Cytoskeleton</location>
    </subcellularLocation>
    <text evidence="2">Recruited to cell-cell contacts in quiescent endothelial cells (By similarity). Colocalizes with the actin cytoskeleton and at actin stress fibers during cell spreading. Recruited to the lower surface of migrating cells, especially the rear end of the cell (By similarity).</text>
</comment>
<comment type="developmental stage">
    <text evidence="9">Expressed in vascular endothelial cells at 24 hpf, however not expressed in intersegmental vessels.</text>
</comment>
<comment type="PTM">
    <text>Autophosphorylated on tyrosine residues in response to ligand binding. Autophosphorylation occurs in trans, i.e. one subunit of the dimeric receptor phosphorylates tyrosine residues on the other subunit. Autophosphorylation occurs in a sequential manner, where Tyr-984 in the kinase activation loop is phosphorylated first, followed by autophosphorylation at additional tyrosine residues. Phosphorylation is important for interaction with scaffold proteins and effectors.</text>
</comment>
<comment type="similarity">
    <text evidence="5">Belongs to the protein kinase superfamily. Tyr protein kinase family. Tie subfamily.</text>
</comment>
<proteinExistence type="evidence at protein level"/>
<dbReference type="EC" id="2.7.10.1" evidence="2"/>
<dbReference type="EMBL" id="AF053632">
    <property type="protein sequence ID" value="AAC09331.1"/>
    <property type="molecule type" value="mRNA"/>
</dbReference>
<dbReference type="RefSeq" id="NP_571536.1">
    <property type="nucleotide sequence ID" value="NM_131461.1"/>
</dbReference>
<dbReference type="SMR" id="O73791"/>
<dbReference type="FunCoup" id="O73791">
    <property type="interactions" value="1728"/>
</dbReference>
<dbReference type="STRING" id="7955.ENSDARP00000055680"/>
<dbReference type="GlyCosmos" id="O73791">
    <property type="glycosylation" value="9 sites, No reported glycans"/>
</dbReference>
<dbReference type="PaxDb" id="7955-ENSDARP00000055680"/>
<dbReference type="GeneID" id="30747"/>
<dbReference type="KEGG" id="dre:30747"/>
<dbReference type="AGR" id="ZFIN:ZDB-GENE-990415-56"/>
<dbReference type="CTD" id="7010"/>
<dbReference type="ZFIN" id="ZDB-GENE-990415-56">
    <property type="gene designation" value="tek"/>
</dbReference>
<dbReference type="eggNOG" id="KOG0200">
    <property type="taxonomic scope" value="Eukaryota"/>
</dbReference>
<dbReference type="InParanoid" id="O73791"/>
<dbReference type="OrthoDB" id="1668230at2759"/>
<dbReference type="PhylomeDB" id="O73791"/>
<dbReference type="BRENDA" id="2.7.10.1">
    <property type="organism ID" value="928"/>
</dbReference>
<dbReference type="Reactome" id="R-DRE-210993">
    <property type="pathway name" value="Tie2 Signaling"/>
</dbReference>
<dbReference type="Reactome" id="R-DRE-5673001">
    <property type="pathway name" value="RAF/MAP kinase cascade"/>
</dbReference>
<dbReference type="PRO" id="PR:O73791"/>
<dbReference type="Proteomes" id="UP000000437">
    <property type="component" value="Chromosome 5"/>
</dbReference>
<dbReference type="GO" id="GO:0005737">
    <property type="term" value="C:cytoplasm"/>
    <property type="evidence" value="ECO:0007669"/>
    <property type="project" value="UniProtKB-KW"/>
</dbReference>
<dbReference type="GO" id="GO:0005856">
    <property type="term" value="C:cytoskeleton"/>
    <property type="evidence" value="ECO:0007669"/>
    <property type="project" value="UniProtKB-SubCell"/>
</dbReference>
<dbReference type="GO" id="GO:0005925">
    <property type="term" value="C:focal adhesion"/>
    <property type="evidence" value="ECO:0007669"/>
    <property type="project" value="UniProtKB-SubCell"/>
</dbReference>
<dbReference type="GO" id="GO:0005886">
    <property type="term" value="C:plasma membrane"/>
    <property type="evidence" value="ECO:0000318"/>
    <property type="project" value="GO_Central"/>
</dbReference>
<dbReference type="GO" id="GO:0043235">
    <property type="term" value="C:receptor complex"/>
    <property type="evidence" value="ECO:0000318"/>
    <property type="project" value="GO_Central"/>
</dbReference>
<dbReference type="GO" id="GO:0005524">
    <property type="term" value="F:ATP binding"/>
    <property type="evidence" value="ECO:0007669"/>
    <property type="project" value="UniProtKB-KW"/>
</dbReference>
<dbReference type="GO" id="GO:0004714">
    <property type="term" value="F:transmembrane receptor protein tyrosine kinase activity"/>
    <property type="evidence" value="ECO:0000318"/>
    <property type="project" value="GO_Central"/>
</dbReference>
<dbReference type="GO" id="GO:0001525">
    <property type="term" value="P:angiogenesis"/>
    <property type="evidence" value="ECO:0000315"/>
    <property type="project" value="ZFIN"/>
</dbReference>
<dbReference type="GO" id="GO:0007169">
    <property type="term" value="P:cell surface receptor protein tyrosine kinase signaling pathway"/>
    <property type="evidence" value="ECO:0000318"/>
    <property type="project" value="GO_Central"/>
</dbReference>
<dbReference type="GO" id="GO:0001935">
    <property type="term" value="P:endothelial cell proliferation"/>
    <property type="evidence" value="ECO:0000318"/>
    <property type="project" value="GO_Central"/>
</dbReference>
<dbReference type="GO" id="GO:0007507">
    <property type="term" value="P:heart development"/>
    <property type="evidence" value="ECO:0000316"/>
    <property type="project" value="ZFIN"/>
</dbReference>
<dbReference type="GO" id="GO:0045766">
    <property type="term" value="P:positive regulation of angiogenesis"/>
    <property type="evidence" value="ECO:0000318"/>
    <property type="project" value="GO_Central"/>
</dbReference>
<dbReference type="GO" id="GO:0010595">
    <property type="term" value="P:positive regulation of endothelial cell migration"/>
    <property type="evidence" value="ECO:0000318"/>
    <property type="project" value="GO_Central"/>
</dbReference>
<dbReference type="GO" id="GO:0043410">
    <property type="term" value="P:positive regulation of MAPK cascade"/>
    <property type="evidence" value="ECO:0000318"/>
    <property type="project" value="GO_Central"/>
</dbReference>
<dbReference type="GO" id="GO:0051897">
    <property type="term" value="P:positive regulation of phosphatidylinositol 3-kinase/protein kinase B signal transduction"/>
    <property type="evidence" value="ECO:0000318"/>
    <property type="project" value="GO_Central"/>
</dbReference>
<dbReference type="CDD" id="cd00054">
    <property type="entry name" value="EGF_CA"/>
    <property type="match status" value="1"/>
</dbReference>
<dbReference type="CDD" id="cd00063">
    <property type="entry name" value="FN3"/>
    <property type="match status" value="2"/>
</dbReference>
<dbReference type="CDD" id="cd05088">
    <property type="entry name" value="PTKc_Tie2"/>
    <property type="match status" value="1"/>
</dbReference>
<dbReference type="FunFam" id="3.30.200.20:FF:000113">
    <property type="entry name" value="Putative tyrosine-protein kinase receptor Tie-1"/>
    <property type="match status" value="1"/>
</dbReference>
<dbReference type="FunFam" id="1.10.510.10:FF:000123">
    <property type="entry name" value="Tyrosine-protein kinase receptor Tie-1"/>
    <property type="match status" value="1"/>
</dbReference>
<dbReference type="FunFam" id="2.170.300.10:FF:000003">
    <property type="entry name" value="tyrosine-protein kinase receptor Tie-1 isoform X1"/>
    <property type="match status" value="1"/>
</dbReference>
<dbReference type="Gene3D" id="2.60.40.10">
    <property type="entry name" value="Immunoglobulins"/>
    <property type="match status" value="6"/>
</dbReference>
<dbReference type="Gene3D" id="3.30.200.20">
    <property type="entry name" value="Phosphorylase Kinase, domain 1"/>
    <property type="match status" value="1"/>
</dbReference>
<dbReference type="Gene3D" id="2.170.300.10">
    <property type="entry name" value="Tie2 ligand-binding domain superfamily"/>
    <property type="match status" value="1"/>
</dbReference>
<dbReference type="Gene3D" id="1.10.510.10">
    <property type="entry name" value="Transferase(Phosphotransferase) domain 1"/>
    <property type="match status" value="1"/>
</dbReference>
<dbReference type="InterPro" id="IPR000742">
    <property type="entry name" value="EGF-like_dom"/>
</dbReference>
<dbReference type="InterPro" id="IPR003961">
    <property type="entry name" value="FN3_dom"/>
</dbReference>
<dbReference type="InterPro" id="IPR036116">
    <property type="entry name" value="FN3_sf"/>
</dbReference>
<dbReference type="InterPro" id="IPR007110">
    <property type="entry name" value="Ig-like_dom"/>
</dbReference>
<dbReference type="InterPro" id="IPR036179">
    <property type="entry name" value="Ig-like_dom_sf"/>
</dbReference>
<dbReference type="InterPro" id="IPR013783">
    <property type="entry name" value="Ig-like_fold"/>
</dbReference>
<dbReference type="InterPro" id="IPR013098">
    <property type="entry name" value="Ig_I-set"/>
</dbReference>
<dbReference type="InterPro" id="IPR003599">
    <property type="entry name" value="Ig_sub"/>
</dbReference>
<dbReference type="InterPro" id="IPR011009">
    <property type="entry name" value="Kinase-like_dom_sf"/>
</dbReference>
<dbReference type="InterPro" id="IPR000719">
    <property type="entry name" value="Prot_kinase_dom"/>
</dbReference>
<dbReference type="InterPro" id="IPR017441">
    <property type="entry name" value="Protein_kinase_ATP_BS"/>
</dbReference>
<dbReference type="InterPro" id="IPR050122">
    <property type="entry name" value="RTK"/>
</dbReference>
<dbReference type="InterPro" id="IPR001245">
    <property type="entry name" value="Ser-Thr/Tyr_kinase_cat_dom"/>
</dbReference>
<dbReference type="InterPro" id="IPR018941">
    <property type="entry name" value="Tyr_kin_Tie2_Ig-like_dom-1_N"/>
</dbReference>
<dbReference type="InterPro" id="IPR008266">
    <property type="entry name" value="Tyr_kinase_AS"/>
</dbReference>
<dbReference type="InterPro" id="IPR020635">
    <property type="entry name" value="Tyr_kinase_cat_dom"/>
</dbReference>
<dbReference type="PANTHER" id="PTHR24416:SF125">
    <property type="entry name" value="ANGIOPOIETIN-1 RECEPTOR"/>
    <property type="match status" value="1"/>
</dbReference>
<dbReference type="PANTHER" id="PTHR24416">
    <property type="entry name" value="TYROSINE-PROTEIN KINASE RECEPTOR"/>
    <property type="match status" value="1"/>
</dbReference>
<dbReference type="Pfam" id="PF00041">
    <property type="entry name" value="fn3"/>
    <property type="match status" value="2"/>
</dbReference>
<dbReference type="Pfam" id="PF07679">
    <property type="entry name" value="I-set"/>
    <property type="match status" value="1"/>
</dbReference>
<dbReference type="Pfam" id="PF10430">
    <property type="entry name" value="Ig_Tie2_1"/>
    <property type="match status" value="1"/>
</dbReference>
<dbReference type="Pfam" id="PF07714">
    <property type="entry name" value="PK_Tyr_Ser-Thr"/>
    <property type="match status" value="1"/>
</dbReference>
<dbReference type="PRINTS" id="PR00109">
    <property type="entry name" value="TYRKINASE"/>
</dbReference>
<dbReference type="SMART" id="SM00181">
    <property type="entry name" value="EGF"/>
    <property type="match status" value="2"/>
</dbReference>
<dbReference type="SMART" id="SM00060">
    <property type="entry name" value="FN3"/>
    <property type="match status" value="3"/>
</dbReference>
<dbReference type="SMART" id="SM00409">
    <property type="entry name" value="IG"/>
    <property type="match status" value="1"/>
</dbReference>
<dbReference type="SMART" id="SM00219">
    <property type="entry name" value="TyrKc"/>
    <property type="match status" value="1"/>
</dbReference>
<dbReference type="SUPFAM" id="SSF49265">
    <property type="entry name" value="Fibronectin type III"/>
    <property type="match status" value="2"/>
</dbReference>
<dbReference type="SUPFAM" id="SSF48726">
    <property type="entry name" value="Immunoglobulin"/>
    <property type="match status" value="1"/>
</dbReference>
<dbReference type="SUPFAM" id="SSF56112">
    <property type="entry name" value="Protein kinase-like (PK-like)"/>
    <property type="match status" value="1"/>
</dbReference>
<dbReference type="PROSITE" id="PS00022">
    <property type="entry name" value="EGF_1"/>
    <property type="match status" value="2"/>
</dbReference>
<dbReference type="PROSITE" id="PS01186">
    <property type="entry name" value="EGF_2"/>
    <property type="match status" value="2"/>
</dbReference>
<dbReference type="PROSITE" id="PS50026">
    <property type="entry name" value="EGF_3"/>
    <property type="match status" value="1"/>
</dbReference>
<dbReference type="PROSITE" id="PS50853">
    <property type="entry name" value="FN3"/>
    <property type="match status" value="3"/>
</dbReference>
<dbReference type="PROSITE" id="PS50835">
    <property type="entry name" value="IG_LIKE"/>
    <property type="match status" value="1"/>
</dbReference>
<dbReference type="PROSITE" id="PS00107">
    <property type="entry name" value="PROTEIN_KINASE_ATP"/>
    <property type="match status" value="1"/>
</dbReference>
<dbReference type="PROSITE" id="PS50011">
    <property type="entry name" value="PROTEIN_KINASE_DOM"/>
    <property type="match status" value="1"/>
</dbReference>
<dbReference type="PROSITE" id="PS00109">
    <property type="entry name" value="PROTEIN_KINASE_TYR"/>
    <property type="match status" value="1"/>
</dbReference>
<evidence type="ECO:0000250" key="1"/>
<evidence type="ECO:0000250" key="2">
    <source>
        <dbReference type="UniProtKB" id="Q02763"/>
    </source>
</evidence>
<evidence type="ECO:0000255" key="3"/>
<evidence type="ECO:0000255" key="4">
    <source>
        <dbReference type="PROSITE-ProRule" id="PRU00076"/>
    </source>
</evidence>
<evidence type="ECO:0000255" key="5">
    <source>
        <dbReference type="PROSITE-ProRule" id="PRU00159"/>
    </source>
</evidence>
<evidence type="ECO:0000255" key="6">
    <source>
        <dbReference type="PROSITE-ProRule" id="PRU00316"/>
    </source>
</evidence>
<evidence type="ECO:0000255" key="7">
    <source>
        <dbReference type="PROSITE-ProRule" id="PRU10028"/>
    </source>
</evidence>
<evidence type="ECO:0000269" key="8">
    <source>
    </source>
</evidence>
<evidence type="ECO:0000269" key="9">
    <source>
    </source>
</evidence>
<evidence type="ECO:0000303" key="10">
    <source>
    </source>
</evidence>
<evidence type="ECO:0000305" key="11"/>
<name>TIE2_DANRE</name>
<protein>
    <recommendedName>
        <fullName evidence="2">Angiopoietin-1 receptor</fullName>
        <ecNumber evidence="2">2.7.10.1</ecNumber>
    </recommendedName>
    <alternativeName>
        <fullName evidence="11">TEK tyrosine kinase, endothelial</fullName>
    </alternativeName>
    <alternativeName>
        <fullName>Tyrosine kinase with Ig and EGF homology domains-2</fullName>
    </alternativeName>
    <alternativeName>
        <fullName>Tyrosine-protein kinase receptor Tie-2</fullName>
    </alternativeName>
</protein>
<feature type="signal peptide" evidence="3">
    <location>
        <begin position="1"/>
        <end position="21"/>
    </location>
</feature>
<feature type="chain" id="PRO_0000024476" description="Angiopoietin-1 receptor">
    <location>
        <begin position="22"/>
        <end position="1116"/>
    </location>
</feature>
<feature type="topological domain" description="Extracellular" evidence="3">
    <location>
        <begin position="22"/>
        <end position="745"/>
    </location>
</feature>
<feature type="transmembrane region" description="Helical" evidence="3">
    <location>
        <begin position="746"/>
        <end position="766"/>
    </location>
</feature>
<feature type="topological domain" description="Cytoplasmic" evidence="3">
    <location>
        <begin position="767"/>
        <end position="1116"/>
    </location>
</feature>
<feature type="domain" description="Ig-like C2-type 1">
    <location>
        <begin position="46"/>
        <end position="126"/>
    </location>
</feature>
<feature type="domain" description="EGF-like 1" evidence="4">
    <location>
        <begin position="214"/>
        <end position="256"/>
    </location>
</feature>
<feature type="domain" description="EGF-like 2" evidence="4">
    <location>
        <begin position="258"/>
        <end position="302"/>
    </location>
</feature>
<feature type="domain" description="EGF-like 3" evidence="4">
    <location>
        <begin position="304"/>
        <end position="342"/>
    </location>
</feature>
<feature type="domain" description="Ig-like C2-type 2">
    <location>
        <begin position="348"/>
        <end position="438"/>
    </location>
</feature>
<feature type="domain" description="Fibronectin type-III 1" evidence="6">
    <location>
        <begin position="444"/>
        <end position="538"/>
    </location>
</feature>
<feature type="domain" description="Fibronectin type-III 2" evidence="6">
    <location>
        <begin position="540"/>
        <end position="633"/>
    </location>
</feature>
<feature type="domain" description="Fibronectin type-III 3" evidence="6">
    <location>
        <begin position="634"/>
        <end position="729"/>
    </location>
</feature>
<feature type="domain" description="Protein kinase" evidence="5">
    <location>
        <begin position="816"/>
        <end position="1095"/>
    </location>
</feature>
<feature type="active site" description="Proton acceptor" evidence="5 7">
    <location>
        <position position="956"/>
    </location>
</feature>
<feature type="binding site" evidence="5">
    <location>
        <begin position="822"/>
        <end position="830"/>
    </location>
    <ligand>
        <name>ATP</name>
        <dbReference type="ChEBI" id="CHEBI:30616"/>
    </ligand>
</feature>
<feature type="binding site" evidence="5">
    <location>
        <position position="847"/>
    </location>
    <ligand>
        <name>ATP</name>
        <dbReference type="ChEBI" id="CHEBI:30616"/>
    </ligand>
</feature>
<feature type="modified residue" description="Phosphotyrosine; by autocatalysis" evidence="1">
    <location>
        <position position="852"/>
    </location>
</feature>
<feature type="modified residue" description="Phosphotyrosine; by autocatalysis" evidence="1">
    <location>
        <position position="984"/>
    </location>
</feature>
<feature type="modified residue" description="Phosphotyrosine; by autocatalysis" evidence="1">
    <location>
        <position position="1094"/>
    </location>
</feature>
<feature type="modified residue" description="Phosphotyrosine; by autocatalysis" evidence="1">
    <location>
        <position position="1100"/>
    </location>
</feature>
<feature type="glycosylation site" description="N-linked (GlcNAc...) asparagine" evidence="3">
    <location>
        <position position="110"/>
    </location>
</feature>
<feature type="glycosylation site" description="N-linked (GlcNAc...) asparagine" evidence="3">
    <location>
        <position position="143"/>
    </location>
</feature>
<feature type="glycosylation site" description="N-linked (GlcNAc...) asparagine" evidence="3">
    <location>
        <position position="223"/>
    </location>
</feature>
<feature type="glycosylation site" description="N-linked (GlcNAc...) asparagine" evidence="3">
    <location>
        <position position="367"/>
    </location>
</feature>
<feature type="glycosylation site" description="N-linked (GlcNAc...) asparagine" evidence="3">
    <location>
        <position position="387"/>
    </location>
</feature>
<feature type="glycosylation site" description="N-linked (GlcNAc...) asparagine" evidence="3">
    <location>
        <position position="425"/>
    </location>
</feature>
<feature type="glycosylation site" description="N-linked (GlcNAc...) asparagine" evidence="3">
    <location>
        <position position="590"/>
    </location>
</feature>
<feature type="glycosylation site" description="N-linked (GlcNAc...) asparagine" evidence="3">
    <location>
        <position position="637"/>
    </location>
</feature>
<feature type="glycosylation site" description="N-linked (GlcNAc...) asparagine" evidence="3">
    <location>
        <position position="642"/>
    </location>
</feature>
<feature type="disulfide bond" evidence="1">
    <location>
        <begin position="46"/>
        <end position="106"/>
    </location>
</feature>
<feature type="disulfide bond" evidence="1">
    <location>
        <begin position="215"/>
        <end position="224"/>
    </location>
</feature>
<feature type="disulfide bond" evidence="1">
    <location>
        <begin position="228"/>
        <end position="237"/>
    </location>
</feature>
<feature type="disulfide bond" evidence="1">
    <location>
        <begin position="231"/>
        <end position="244"/>
    </location>
</feature>
<feature type="disulfide bond" evidence="1">
    <location>
        <begin position="246"/>
        <end position="255"/>
    </location>
</feature>
<feature type="disulfide bond" evidence="1">
    <location>
        <begin position="259"/>
        <end position="268"/>
    </location>
</feature>
<feature type="disulfide bond" evidence="1">
    <location>
        <begin position="272"/>
        <end position="277"/>
    </location>
</feature>
<feature type="disulfide bond" evidence="1">
    <location>
        <begin position="283"/>
        <end position="290"/>
    </location>
</feature>
<feature type="disulfide bond" evidence="1">
    <location>
        <begin position="292"/>
        <end position="301"/>
    </location>
</feature>
<feature type="disulfide bond" evidence="1">
    <location>
        <begin position="305"/>
        <end position="314"/>
    </location>
</feature>
<feature type="disulfide bond" evidence="1">
    <location>
        <begin position="318"/>
        <end position="325"/>
    </location>
</feature>
<feature type="disulfide bond" evidence="1">
    <location>
        <begin position="320"/>
        <end position="331"/>
    </location>
</feature>
<feature type="disulfide bond" evidence="1">
    <location>
        <begin position="333"/>
        <end position="341"/>
    </location>
</feature>
<feature type="disulfide bond" evidence="1">
    <location>
        <begin position="368"/>
        <end position="422"/>
    </location>
</feature>
<organism>
    <name type="scientific">Danio rerio</name>
    <name type="common">Zebrafish</name>
    <name type="synonym">Brachydanio rerio</name>
    <dbReference type="NCBI Taxonomy" id="7955"/>
    <lineage>
        <taxon>Eukaryota</taxon>
        <taxon>Metazoa</taxon>
        <taxon>Chordata</taxon>
        <taxon>Craniata</taxon>
        <taxon>Vertebrata</taxon>
        <taxon>Euteleostomi</taxon>
        <taxon>Actinopterygii</taxon>
        <taxon>Neopterygii</taxon>
        <taxon>Teleostei</taxon>
        <taxon>Ostariophysi</taxon>
        <taxon>Cypriniformes</taxon>
        <taxon>Danionidae</taxon>
        <taxon>Danioninae</taxon>
        <taxon>Danio</taxon>
    </lineage>
</organism>